<keyword id="KW-0007">Acetylation</keyword>
<keyword id="KW-0963">Cytoplasm</keyword>
<keyword id="KW-0378">Hydrolase</keyword>
<keyword id="KW-0434">Leukotriene biosynthesis</keyword>
<keyword id="KW-0479">Metal-binding</keyword>
<keyword id="KW-0482">Metalloprotease</keyword>
<keyword id="KW-0597">Phosphoprotein</keyword>
<keyword id="KW-0645">Protease</keyword>
<keyword id="KW-1185">Reference proteome</keyword>
<keyword id="KW-0862">Zinc</keyword>
<reference key="1">
    <citation type="submission" date="2003-11" db="EMBL/GenBank/DDBJ databases">
        <title>The chinchilla leukotriene A4 hydrolase gene is expressed in normal middle ear mucosa.</title>
        <authorList>
            <person name="Erdos G."/>
            <person name="Hu F.Z."/>
            <person name="Donfack J."/>
            <person name="Ahmed A.I."/>
            <person name="Preston R.A."/>
            <person name="Post J.C."/>
            <person name="Ehrlich G.D."/>
        </authorList>
    </citation>
    <scope>NUCLEOTIDE SEQUENCE [MRNA]</scope>
    <source>
        <tissue>Middle ear mucosa</tissue>
    </source>
</reference>
<protein>
    <recommendedName>
        <fullName>Leukotriene A-4 hydrolase</fullName>
        <shortName>LTA-4 hydrolase</shortName>
        <ecNumber>3.3.2.6</ecNumber>
    </recommendedName>
    <alternativeName>
        <fullName>Leukotriene A(4) hydrolase</fullName>
    </alternativeName>
</protein>
<sequence length="611" mass="69213">MPEVEDTCFLTSPITVCRTKHLHLRCSVDFSSRALTGIAALTIQSQEDNLRSLVLDTKALTIEKVVINGQEVKYALGERQSYKGSPMEISLPIALSKNQEVVIEISFETSPKSSALQWLTPEQTSGKEHPYLFSQCQAIHCRAVLPCQDTPSVKLTYTAEVSVPKELVALMSAVRDGETPDPEDPSRKIYKFNQKVPIPCYLIALVVGALESRKIGPRTLVWSEKEQVEKSAYEFSETESMLKIAEDLGGPYVWGQYDLLVLPPSFPYGGMENPCLTFVTPTLLAGDKSLSNVIAHEISHSWTGNLVTNKTWDHFWLNEGHTVYLERHICGRLFGEKFRHFHALGGWGELQNTIKTFGETHPFTKLVVDLTDVDPDVAYSSVPYEKGFALLFHLEQLLGGPEVFLGFLKAYVERFSYKSITTDDWKNFLYSHFKDKVDILNQVDWNAWLYSPGLPPVKPNYDMTLTNACIALSQRWITAKEEDLNTFNATDLKDLSTHQVNEFLAQVLQQAPLPLGHVKRMQEVYNFNAVNNSEIRFRWLRLCIQSKWEEAIPLALKMATEQGRMKFTRPLFKDLAAFDKSHDQAIRTYQAHKASMHPVTAMLVGKDLKVD</sequence>
<accession>Q6S9C8</accession>
<comment type="function">
    <text evidence="1">Epoxide hydrolase that catalyzes the final step in the biosynthesis of the pro-inflammatory mediator leukotriene B4. Also has aminopeptidase activity (By similarity).</text>
</comment>
<comment type="catalytic activity">
    <reaction>
        <text>leukotriene A4 + H2O = leukotriene B4</text>
        <dbReference type="Rhea" id="RHEA:22324"/>
        <dbReference type="ChEBI" id="CHEBI:15377"/>
        <dbReference type="ChEBI" id="CHEBI:57461"/>
        <dbReference type="ChEBI" id="CHEBI:57463"/>
        <dbReference type="EC" id="3.3.2.6"/>
    </reaction>
</comment>
<comment type="cofactor">
    <cofactor evidence="1">
        <name>Zn(2+)</name>
        <dbReference type="ChEBI" id="CHEBI:29105"/>
    </cofactor>
    <text evidence="1">Binds 1 zinc ion per subunit.</text>
</comment>
<comment type="activity regulation">
    <text evidence="1">Inhibited by bestatin. Subject to suicide inhibition by leukotriene A4 (By similarity).</text>
</comment>
<comment type="pathway">
    <text>Lipid metabolism; leukotriene B4 biosynthesis.</text>
</comment>
<comment type="subcellular location">
    <subcellularLocation>
        <location evidence="1">Cytoplasm</location>
    </subcellularLocation>
</comment>
<comment type="PTM">
    <text evidence="1">Phosphorylation at Ser-416 inhibits enzymatic activity.</text>
</comment>
<comment type="similarity">
    <text evidence="4">Belongs to the peptidase M1 family.</text>
</comment>
<dbReference type="EC" id="3.3.2.6"/>
<dbReference type="EMBL" id="AY462137">
    <property type="protein sequence ID" value="AAR26536.1"/>
    <property type="molecule type" value="mRNA"/>
</dbReference>
<dbReference type="RefSeq" id="NP_001269293.1">
    <property type="nucleotide sequence ID" value="NM_001282364.1"/>
</dbReference>
<dbReference type="SMR" id="Q6S9C8"/>
<dbReference type="MEROPS" id="M01.004"/>
<dbReference type="GeneID" id="102007852"/>
<dbReference type="CTD" id="4048"/>
<dbReference type="OrthoDB" id="79562at2759"/>
<dbReference type="UniPathway" id="UPA00878"/>
<dbReference type="Proteomes" id="UP000694398">
    <property type="component" value="Unplaced"/>
</dbReference>
<dbReference type="GO" id="GO:0005829">
    <property type="term" value="C:cytosol"/>
    <property type="evidence" value="ECO:0007669"/>
    <property type="project" value="TreeGrafter"/>
</dbReference>
<dbReference type="GO" id="GO:0005634">
    <property type="term" value="C:nucleus"/>
    <property type="evidence" value="ECO:0007669"/>
    <property type="project" value="TreeGrafter"/>
</dbReference>
<dbReference type="GO" id="GO:0004177">
    <property type="term" value="F:aminopeptidase activity"/>
    <property type="evidence" value="ECO:0000250"/>
    <property type="project" value="UniProtKB"/>
</dbReference>
<dbReference type="GO" id="GO:0004301">
    <property type="term" value="F:epoxide hydrolase activity"/>
    <property type="evidence" value="ECO:0000250"/>
    <property type="project" value="UniProtKB"/>
</dbReference>
<dbReference type="GO" id="GO:0004463">
    <property type="term" value="F:leukotriene-A4 hydrolase activity"/>
    <property type="evidence" value="ECO:0000250"/>
    <property type="project" value="UniProtKB"/>
</dbReference>
<dbReference type="GO" id="GO:0008237">
    <property type="term" value="F:metallopeptidase activity"/>
    <property type="evidence" value="ECO:0007669"/>
    <property type="project" value="UniProtKB-KW"/>
</dbReference>
<dbReference type="GO" id="GO:0008270">
    <property type="term" value="F:zinc ion binding"/>
    <property type="evidence" value="ECO:0000250"/>
    <property type="project" value="UniProtKB"/>
</dbReference>
<dbReference type="GO" id="GO:0019370">
    <property type="term" value="P:leukotriene biosynthetic process"/>
    <property type="evidence" value="ECO:0000250"/>
    <property type="project" value="UniProtKB"/>
</dbReference>
<dbReference type="GO" id="GO:0043171">
    <property type="term" value="P:peptide catabolic process"/>
    <property type="evidence" value="ECO:0000250"/>
    <property type="project" value="UniProtKB"/>
</dbReference>
<dbReference type="GO" id="GO:0006508">
    <property type="term" value="P:proteolysis"/>
    <property type="evidence" value="ECO:0007669"/>
    <property type="project" value="UniProtKB-KW"/>
</dbReference>
<dbReference type="CDD" id="cd09599">
    <property type="entry name" value="M1_LTA4H"/>
    <property type="match status" value="1"/>
</dbReference>
<dbReference type="FunFam" id="1.10.390.10:FF:000003">
    <property type="entry name" value="Leukotriene A(4) hydrolase"/>
    <property type="match status" value="1"/>
</dbReference>
<dbReference type="FunFam" id="1.25.40.320:FF:000002">
    <property type="entry name" value="Leukotriene A(4) hydrolase"/>
    <property type="match status" value="1"/>
</dbReference>
<dbReference type="FunFam" id="2.60.40.1730:FF:000004">
    <property type="entry name" value="Leukotriene A(4) hydrolase"/>
    <property type="match status" value="1"/>
</dbReference>
<dbReference type="FunFam" id="3.30.2010.30:FF:000001">
    <property type="entry name" value="Leukotriene A(4) hydrolase"/>
    <property type="match status" value="1"/>
</dbReference>
<dbReference type="Gene3D" id="3.30.2010.30">
    <property type="match status" value="1"/>
</dbReference>
<dbReference type="Gene3D" id="1.10.390.10">
    <property type="entry name" value="Neutral Protease Domain 2"/>
    <property type="match status" value="1"/>
</dbReference>
<dbReference type="Gene3D" id="1.25.40.320">
    <property type="entry name" value="Peptidase M1, leukotriene A4 hydrolase/aminopeptidase C-terminal domain"/>
    <property type="match status" value="1"/>
</dbReference>
<dbReference type="Gene3D" id="2.60.40.1730">
    <property type="entry name" value="tricorn interacting facor f3 domain"/>
    <property type="match status" value="1"/>
</dbReference>
<dbReference type="InterPro" id="IPR045357">
    <property type="entry name" value="Aminopeptidase_N-like_N"/>
</dbReference>
<dbReference type="InterPro" id="IPR042097">
    <property type="entry name" value="Aminopeptidase_N-like_N_sf"/>
</dbReference>
<dbReference type="InterPro" id="IPR016024">
    <property type="entry name" value="ARM-type_fold"/>
</dbReference>
<dbReference type="InterPro" id="IPR012777">
    <property type="entry name" value="LTA4H"/>
</dbReference>
<dbReference type="InterPro" id="IPR049980">
    <property type="entry name" value="LTA4H_cat"/>
</dbReference>
<dbReference type="InterPro" id="IPR038502">
    <property type="entry name" value="M1_LTA-4_hydro/amino_C_sf"/>
</dbReference>
<dbReference type="InterPro" id="IPR034015">
    <property type="entry name" value="M1_LTA4H"/>
</dbReference>
<dbReference type="InterPro" id="IPR001930">
    <property type="entry name" value="Peptidase_M1"/>
</dbReference>
<dbReference type="InterPro" id="IPR015211">
    <property type="entry name" value="Peptidase_M1_C"/>
</dbReference>
<dbReference type="InterPro" id="IPR014782">
    <property type="entry name" value="Peptidase_M1_dom"/>
</dbReference>
<dbReference type="InterPro" id="IPR027268">
    <property type="entry name" value="Peptidase_M4/M1_CTD_sf"/>
</dbReference>
<dbReference type="NCBIfam" id="TIGR02411">
    <property type="entry name" value="leuko_A4_hydro"/>
    <property type="match status" value="1"/>
</dbReference>
<dbReference type="PANTHER" id="PTHR45726">
    <property type="entry name" value="LEUKOTRIENE A-4 HYDROLASE"/>
    <property type="match status" value="1"/>
</dbReference>
<dbReference type="PANTHER" id="PTHR45726:SF3">
    <property type="entry name" value="LEUKOTRIENE A-4 HYDROLASE"/>
    <property type="match status" value="1"/>
</dbReference>
<dbReference type="Pfam" id="PF09127">
    <property type="entry name" value="Leuk-A4-hydro_C"/>
    <property type="match status" value="1"/>
</dbReference>
<dbReference type="Pfam" id="PF01433">
    <property type="entry name" value="Peptidase_M1"/>
    <property type="match status" value="1"/>
</dbReference>
<dbReference type="Pfam" id="PF17900">
    <property type="entry name" value="Peptidase_M1_N"/>
    <property type="match status" value="1"/>
</dbReference>
<dbReference type="PRINTS" id="PR00756">
    <property type="entry name" value="ALADIPTASE"/>
</dbReference>
<dbReference type="SMART" id="SM01263">
    <property type="entry name" value="Leuk-A4-hydro_C"/>
    <property type="match status" value="1"/>
</dbReference>
<dbReference type="SUPFAM" id="SSF48371">
    <property type="entry name" value="ARM repeat"/>
    <property type="match status" value="1"/>
</dbReference>
<dbReference type="SUPFAM" id="SSF63737">
    <property type="entry name" value="Leukotriene A4 hydrolase N-terminal domain"/>
    <property type="match status" value="1"/>
</dbReference>
<dbReference type="SUPFAM" id="SSF55486">
    <property type="entry name" value="Metalloproteases ('zincins'), catalytic domain"/>
    <property type="match status" value="1"/>
</dbReference>
<dbReference type="PROSITE" id="PS00142">
    <property type="entry name" value="ZINC_PROTEASE"/>
    <property type="match status" value="1"/>
</dbReference>
<proteinExistence type="evidence at transcript level"/>
<name>LKHA4_CHILA</name>
<evidence type="ECO:0000250" key="1"/>
<evidence type="ECO:0000250" key="2">
    <source>
        <dbReference type="UniProtKB" id="P09960"/>
    </source>
</evidence>
<evidence type="ECO:0000255" key="3">
    <source>
        <dbReference type="PROSITE-ProRule" id="PRU10095"/>
    </source>
</evidence>
<evidence type="ECO:0000305" key="4"/>
<feature type="chain" id="PRO_0000095123" description="Leukotriene A-4 hydrolase">
    <location>
        <begin position="1"/>
        <end position="611"/>
    </location>
</feature>
<feature type="active site" description="Proton acceptor" evidence="3">
    <location>
        <position position="297"/>
    </location>
</feature>
<feature type="active site" description="Proton donor" evidence="3">
    <location>
        <position position="384"/>
    </location>
</feature>
<feature type="binding site" evidence="1">
    <location>
        <begin position="135"/>
        <end position="137"/>
    </location>
    <ligand>
        <name>a peptide</name>
        <dbReference type="ChEBI" id="CHEBI:60466"/>
    </ligand>
</feature>
<feature type="binding site" evidence="1">
    <location>
        <begin position="267"/>
        <end position="272"/>
    </location>
    <ligand>
        <name>a peptide</name>
        <dbReference type="ChEBI" id="CHEBI:60466"/>
    </ligand>
</feature>
<feature type="binding site" evidence="3">
    <location>
        <position position="296"/>
    </location>
    <ligand>
        <name>Zn(2+)</name>
        <dbReference type="ChEBI" id="CHEBI:29105"/>
        <note>catalytic</note>
    </ligand>
</feature>
<feature type="binding site" evidence="3">
    <location>
        <position position="300"/>
    </location>
    <ligand>
        <name>Zn(2+)</name>
        <dbReference type="ChEBI" id="CHEBI:29105"/>
        <note>catalytic</note>
    </ligand>
</feature>
<feature type="binding site" evidence="3">
    <location>
        <position position="319"/>
    </location>
    <ligand>
        <name>Zn(2+)</name>
        <dbReference type="ChEBI" id="CHEBI:29105"/>
        <note>catalytic</note>
    </ligand>
</feature>
<feature type="binding site" evidence="1">
    <location>
        <begin position="564"/>
        <end position="566"/>
    </location>
    <ligand>
        <name>a peptide</name>
        <dbReference type="ChEBI" id="CHEBI:60466"/>
    </ligand>
</feature>
<feature type="site" description="Essential for epoxide hydrolase activity, but not for aminopeptidase activity" evidence="1">
    <location>
        <position position="376"/>
    </location>
</feature>
<feature type="site" description="Covalently modified during suicide inhibition by leukotrienes" evidence="1">
    <location>
        <position position="379"/>
    </location>
</feature>
<feature type="modified residue" description="N6-acetyllysine" evidence="2">
    <location>
        <position position="73"/>
    </location>
</feature>
<feature type="modified residue" description="N6-acetyllysine" evidence="2">
    <location>
        <position position="337"/>
    </location>
</feature>
<feature type="modified residue" description="Phosphoserine" evidence="2">
    <location>
        <position position="416"/>
    </location>
</feature>
<feature type="modified residue" description="N6-acetyllysine" evidence="2">
    <location>
        <position position="573"/>
    </location>
</feature>
<organism>
    <name type="scientific">Chinchilla lanigera</name>
    <name type="common">Long-tailed chinchilla</name>
    <name type="synonym">Chinchilla villidera</name>
    <dbReference type="NCBI Taxonomy" id="34839"/>
    <lineage>
        <taxon>Eukaryota</taxon>
        <taxon>Metazoa</taxon>
        <taxon>Chordata</taxon>
        <taxon>Craniata</taxon>
        <taxon>Vertebrata</taxon>
        <taxon>Euteleostomi</taxon>
        <taxon>Mammalia</taxon>
        <taxon>Eutheria</taxon>
        <taxon>Euarchontoglires</taxon>
        <taxon>Glires</taxon>
        <taxon>Rodentia</taxon>
        <taxon>Hystricomorpha</taxon>
        <taxon>Chinchillidae</taxon>
        <taxon>Chinchilla</taxon>
    </lineage>
</organism>
<gene>
    <name type="primary">LTA4H</name>
</gene>